<evidence type="ECO:0000255" key="1"/>
<evidence type="ECO:0000256" key="2">
    <source>
        <dbReference type="SAM" id="MobiDB-lite"/>
    </source>
</evidence>
<evidence type="ECO:0000269" key="3">
    <source>
    </source>
</evidence>
<evidence type="ECO:0000269" key="4">
    <source>
    </source>
</evidence>
<evidence type="ECO:0000269" key="5">
    <source>
    </source>
</evidence>
<evidence type="ECO:0000269" key="6">
    <source>
    </source>
</evidence>
<evidence type="ECO:0000269" key="7">
    <source>
    </source>
</evidence>
<evidence type="ECO:0000303" key="8">
    <source>
    </source>
</evidence>
<evidence type="ECO:0000303" key="9">
    <source>
    </source>
</evidence>
<evidence type="ECO:0000303" key="10">
    <source>
    </source>
</evidence>
<evidence type="ECO:0000305" key="11"/>
<evidence type="ECO:0000312" key="12">
    <source>
        <dbReference type="HGNC" id="HGNC:29116"/>
    </source>
</evidence>
<evidence type="ECO:0007744" key="13">
    <source>
    </source>
</evidence>
<evidence type="ECO:0007744" key="14">
    <source>
    </source>
</evidence>
<evidence type="ECO:0007744" key="15">
    <source>
    </source>
</evidence>
<evidence type="ECO:0007744" key="16">
    <source>
    </source>
</evidence>
<evidence type="ECO:0007744" key="17">
    <source>
    </source>
</evidence>
<organism>
    <name type="scientific">Homo sapiens</name>
    <name type="common">Human</name>
    <dbReference type="NCBI Taxonomy" id="9606"/>
    <lineage>
        <taxon>Eukaryota</taxon>
        <taxon>Metazoa</taxon>
        <taxon>Chordata</taxon>
        <taxon>Craniata</taxon>
        <taxon>Vertebrata</taxon>
        <taxon>Euteleostomi</taxon>
        <taxon>Mammalia</taxon>
        <taxon>Eutheria</taxon>
        <taxon>Euarchontoglires</taxon>
        <taxon>Primates</taxon>
        <taxon>Haplorrhini</taxon>
        <taxon>Catarrhini</taxon>
        <taxon>Hominidae</taxon>
        <taxon>Homo</taxon>
    </lineage>
</organism>
<feature type="chain" id="PRO_0000184595" description="Transmembrane and coiled-coil domains protein 1">
    <location>
        <begin position="1"/>
        <end position="653"/>
    </location>
</feature>
<feature type="topological domain" description="Cytoplasmic" evidence="1">
    <location>
        <begin position="1"/>
        <end position="591"/>
    </location>
</feature>
<feature type="transmembrane region" description="Helical" evidence="1">
    <location>
        <begin position="592"/>
        <end position="612"/>
    </location>
</feature>
<feature type="transmembrane region" description="Helical" evidence="1">
    <location>
        <begin position="625"/>
        <end position="645"/>
    </location>
</feature>
<feature type="topological domain" description="Cytoplasmic" evidence="1">
    <location>
        <begin position="646"/>
        <end position="653"/>
    </location>
</feature>
<feature type="region of interest" description="Disordered" evidence="2">
    <location>
        <begin position="1"/>
        <end position="35"/>
    </location>
</feature>
<feature type="region of interest" description="Disordered" evidence="2">
    <location>
        <begin position="58"/>
        <end position="78"/>
    </location>
</feature>
<feature type="region of interest" description="Disordered" evidence="2">
    <location>
        <begin position="112"/>
        <end position="165"/>
    </location>
</feature>
<feature type="region of interest" description="Disordered" evidence="2">
    <location>
        <begin position="204"/>
        <end position="227"/>
    </location>
</feature>
<feature type="region of interest" description="Disordered" evidence="2">
    <location>
        <begin position="415"/>
        <end position="437"/>
    </location>
</feature>
<feature type="coiled-coil region" evidence="1">
    <location>
        <begin position="228"/>
        <end position="313"/>
    </location>
</feature>
<feature type="coiled-coil region" evidence="1">
    <location>
        <begin position="458"/>
        <end position="576"/>
    </location>
</feature>
<feature type="compositionally biased region" description="Basic and acidic residues" evidence="2">
    <location>
        <begin position="20"/>
        <end position="34"/>
    </location>
</feature>
<feature type="compositionally biased region" description="Polar residues" evidence="2">
    <location>
        <begin position="64"/>
        <end position="74"/>
    </location>
</feature>
<feature type="compositionally biased region" description="Basic residues" evidence="2">
    <location>
        <begin position="113"/>
        <end position="125"/>
    </location>
</feature>
<feature type="compositionally biased region" description="Polar residues" evidence="2">
    <location>
        <begin position="135"/>
        <end position="144"/>
    </location>
</feature>
<feature type="compositionally biased region" description="Low complexity" evidence="2">
    <location>
        <begin position="153"/>
        <end position="165"/>
    </location>
</feature>
<feature type="compositionally biased region" description="Polar residues" evidence="2">
    <location>
        <begin position="204"/>
        <end position="218"/>
    </location>
</feature>
<feature type="compositionally biased region" description="Polar residues" evidence="2">
    <location>
        <begin position="424"/>
        <end position="437"/>
    </location>
</feature>
<feature type="modified residue" description="N-acetylmethionine" evidence="15">
    <location>
        <position position="1"/>
    </location>
</feature>
<feature type="modified residue" description="Phosphoserine" evidence="13 14 16 17">
    <location>
        <position position="382"/>
    </location>
</feature>
<feature type="modified residue" description="Phosphoserine" evidence="16">
    <location>
        <position position="414"/>
    </location>
</feature>
<feature type="splice variant" id="VSP_053924" description="In isoform 2." evidence="8">
    <original>MEPSGSEQLFEDP</original>
    <variation>MVQRFSLRRQLSK</variation>
    <location>
        <begin position="1"/>
        <end position="13"/>
    </location>
</feature>
<feature type="splice variant" id="VSP_053925" description="In isoform 2." evidence="8">
    <location>
        <begin position="14"/>
        <end position="192"/>
    </location>
</feature>
<feature type="sequence variant" id="VAR_047918" description="In dbSNP:rs784689." evidence="3 4 5 13">
    <original>S</original>
    <variation>G</variation>
    <location>
        <position position="165"/>
    </location>
</feature>
<feature type="sequence conflict" description="In Ref. 1; BAF84137." evidence="11" ref="1">
    <original>S</original>
    <variation>T</variation>
    <location>
        <position position="166"/>
    </location>
</feature>
<feature type="sequence conflict" description="In Ref. 1; BAF84137." evidence="11" ref="1">
    <original>D</original>
    <variation>G</variation>
    <location>
        <position position="639"/>
    </location>
</feature>
<protein>
    <recommendedName>
        <fullName evidence="9">Transmembrane and coiled-coil domains protein 1</fullName>
    </recommendedName>
</protein>
<sequence>MEPSGSEQLFEDPDPGGKSQDAEARKQTESEQKLSKMTHNALENINVIGQGLKHLFQHQRRRSSVSPHDVQQIQADPEPEMDLESQNACAEIDGVPTHPTALNRVLQQIRVPPKMKRGTSLHSRRGKPEAPKGSPQINRKSGQEMTAVMQSGRPRSSSTTDAPTSSAMMEIACAAAAAAAACLPGEEGTAERIERLEVSSLAQTSSAVASSTDGSIHTDSVDGTPDPQRTKAAIAHLQQKILKLTEQIKIAQTARDDNVAEYLKLANSADKQQAARIKQVFEKKNQKSAQTILQLQKKLEHYHRKLREVEQNGIPRQPKDVFRDMHQGLKDVGAKVTGFSEGVVDSVKGGFSSFSQATHSAAGAVVSKPREIASLIRNKFGSADNIPNLKDSLEEGQVDDAGKALGVISNFQSSPKYGSEEDCSSATSGSVGANSTTGGIAVGASSSKTNTLDMQSSGFDALLHEIQEIRETQARLEESFETLKEHYQRDYSLIMQTLQEERYRCERLEEQLNDLTELHQNEILNLKQELASMEEKIAYQSYERARDIQEALEACQTRISKMELQQQQQQVVQLEGLENATARNLLGKLINILLAVMAVLLVFVSTVANCVVPLMKTRNRTFSTLFLVVFIAFLWKHWDALFSYVERFFSSPR</sequence>
<accession>O94876</accession>
<accession>A8K5Y3</accession>
<accession>B4DE04</accession>
<accession>Q68E06</accession>
<accession>Q8IXM8</accession>
<keyword id="KW-0007">Acetylation</keyword>
<keyword id="KW-0025">Alternative splicing</keyword>
<keyword id="KW-0175">Coiled coil</keyword>
<keyword id="KW-0256">Endoplasmic reticulum</keyword>
<keyword id="KW-0472">Membrane</keyword>
<keyword id="KW-0597">Phosphoprotein</keyword>
<keyword id="KW-1267">Proteomics identification</keyword>
<keyword id="KW-1185">Reference proteome</keyword>
<keyword id="KW-0812">Transmembrane</keyword>
<keyword id="KW-1133">Transmembrane helix</keyword>
<keyword id="KW-0813">Transport</keyword>
<comment type="function">
    <text evidence="7">Endoplasmic reticulum membrane protein that promotes endoplasmic reticulum-associated endosome fission (PubMed:30220460). Localizes to contact sites between the endoplasmic reticulum and endosomes and acts by promoting recruitment of the endoplasmic reticulum to endosome tubules for fission (PubMed:30220460). Endosome membrane fission of early and late endosomes is essential to separate regions destined for lysosomal degradation from carriers to be recycled to the plasma membrane (PubMed:30220460).</text>
</comment>
<comment type="subunit">
    <text evidence="6">May form homodimers and heterodimers with TMCC2 or TMCC3 via the coiled-coil domains (PubMed:24454821). Interacts with ribosomal proteins RPL4 and RPS6 (PubMed:24454821).</text>
</comment>
<comment type="subcellular location">
    <subcellularLocation>
        <location evidence="6 7">Endoplasmic reticulum membrane</location>
        <topology evidence="1">Multi-pass membrane protein</topology>
    </subcellularLocation>
    <text evidence="7">Specifically localizes to contact sites between the endoplasmic reticulum and endosomes that are spatially and temporally linked to endosome fission.</text>
</comment>
<comment type="alternative products">
    <event type="alternative splicing"/>
    <isoform>
        <id>O94876-1</id>
        <name>1</name>
        <sequence type="displayed"/>
    </isoform>
    <isoform>
        <id>O94876-2</id>
        <name>2</name>
        <sequence type="described" ref="VSP_053924 VSP_053925"/>
    </isoform>
</comment>
<comment type="similarity">
    <text evidence="11">Belongs to the TEX28 family.</text>
</comment>
<proteinExistence type="evidence at protein level"/>
<dbReference type="EMBL" id="AK291448">
    <property type="protein sequence ID" value="BAF84137.1"/>
    <property type="molecule type" value="mRNA"/>
</dbReference>
<dbReference type="EMBL" id="AK293408">
    <property type="protein sequence ID" value="BAG56915.1"/>
    <property type="molecule type" value="mRNA"/>
</dbReference>
<dbReference type="EMBL" id="AC023162">
    <property type="status" value="NOT_ANNOTATED_CDS"/>
    <property type="molecule type" value="Genomic_DNA"/>
</dbReference>
<dbReference type="EMBL" id="AC083799">
    <property type="status" value="NOT_ANNOTATED_CDS"/>
    <property type="molecule type" value="Genomic_DNA"/>
</dbReference>
<dbReference type="EMBL" id="AC117492">
    <property type="status" value="NOT_ANNOTATED_CDS"/>
    <property type="molecule type" value="Genomic_DNA"/>
</dbReference>
<dbReference type="EMBL" id="AL449209">
    <property type="status" value="NOT_ANNOTATED_CDS"/>
    <property type="molecule type" value="Genomic_DNA"/>
</dbReference>
<dbReference type="EMBL" id="BC039859">
    <property type="protein sequence ID" value="AAH39859.1"/>
    <property type="molecule type" value="mRNA"/>
</dbReference>
<dbReference type="EMBL" id="CR749206">
    <property type="protein sequence ID" value="CAH18064.2"/>
    <property type="molecule type" value="mRNA"/>
</dbReference>
<dbReference type="EMBL" id="AB018322">
    <property type="protein sequence ID" value="BAA34499.1"/>
    <property type="molecule type" value="mRNA"/>
</dbReference>
<dbReference type="CCDS" id="CCDS33855.1">
    <molecule id="O94876-1"/>
</dbReference>
<dbReference type="CCDS" id="CCDS93383.1">
    <molecule id="O94876-2"/>
</dbReference>
<dbReference type="RefSeq" id="NP_001017395.2">
    <molecule id="O94876-1"/>
    <property type="nucleotide sequence ID" value="NM_001017395.5"/>
</dbReference>
<dbReference type="RefSeq" id="NP_001121696.1">
    <property type="nucleotide sequence ID" value="NM_001128224.2"/>
</dbReference>
<dbReference type="RefSeq" id="NP_001336192.1">
    <molecule id="O94876-1"/>
    <property type="nucleotide sequence ID" value="NM_001349263.2"/>
</dbReference>
<dbReference type="RefSeq" id="NP_001336193.1">
    <molecule id="O94876-1"/>
    <property type="nucleotide sequence ID" value="NM_001349264.2"/>
</dbReference>
<dbReference type="RefSeq" id="NP_001336194.1">
    <molecule id="O94876-1"/>
    <property type="nucleotide sequence ID" value="NM_001349265.2"/>
</dbReference>
<dbReference type="RefSeq" id="NP_001336195.1">
    <molecule id="O94876-1"/>
    <property type="nucleotide sequence ID" value="NM_001349266.2"/>
</dbReference>
<dbReference type="RefSeq" id="NP_001336197.1">
    <molecule id="O94876-1"/>
    <property type="nucleotide sequence ID" value="NM_001349268.2"/>
</dbReference>
<dbReference type="RefSeq" id="NP_001336202.1">
    <molecule id="O94876-2"/>
    <property type="nucleotide sequence ID" value="NM_001349273.2"/>
</dbReference>
<dbReference type="RefSeq" id="XP_006713605.1">
    <property type="nucleotide sequence ID" value="XM_006713542.3"/>
</dbReference>
<dbReference type="RefSeq" id="XP_006713606.1">
    <property type="nucleotide sequence ID" value="XM_006713543.3"/>
</dbReference>
<dbReference type="RefSeq" id="XP_006713607.1">
    <property type="nucleotide sequence ID" value="XM_006713544.1"/>
</dbReference>
<dbReference type="RefSeq" id="XP_011510874.1">
    <property type="nucleotide sequence ID" value="XM_011512572.2"/>
</dbReference>
<dbReference type="RefSeq" id="XP_011510875.1">
    <property type="nucleotide sequence ID" value="XM_011512573.2"/>
</dbReference>
<dbReference type="RefSeq" id="XP_011510878.1">
    <property type="nucleotide sequence ID" value="XM_011512576.2"/>
</dbReference>
<dbReference type="RefSeq" id="XP_011510881.1">
    <property type="nucleotide sequence ID" value="XM_011512579.2"/>
</dbReference>
<dbReference type="RefSeq" id="XP_011510884.1">
    <property type="nucleotide sequence ID" value="XM_011512582.1"/>
</dbReference>
<dbReference type="RefSeq" id="XP_016861420.1">
    <property type="nucleotide sequence ID" value="XM_017005931.1"/>
</dbReference>
<dbReference type="RefSeq" id="XP_016861421.1">
    <property type="nucleotide sequence ID" value="XM_017005932.1"/>
</dbReference>
<dbReference type="RefSeq" id="XP_016861422.1">
    <property type="nucleotide sequence ID" value="XM_017005933.1"/>
</dbReference>
<dbReference type="SMR" id="O94876"/>
<dbReference type="BioGRID" id="116663">
    <property type="interactions" value="27"/>
</dbReference>
<dbReference type="FunCoup" id="O94876">
    <property type="interactions" value="1903"/>
</dbReference>
<dbReference type="IntAct" id="O94876">
    <property type="interactions" value="19"/>
</dbReference>
<dbReference type="MINT" id="O94876"/>
<dbReference type="STRING" id="9606.ENSP00000376930"/>
<dbReference type="TCDB" id="8.A.109.1.6">
    <property type="family name" value="the endoplasmic reticulum junction-forming protein (lunapark) family"/>
</dbReference>
<dbReference type="iPTMnet" id="O94876"/>
<dbReference type="PhosphoSitePlus" id="O94876"/>
<dbReference type="BioMuta" id="TMCC1"/>
<dbReference type="jPOST" id="O94876"/>
<dbReference type="MassIVE" id="O94876"/>
<dbReference type="PaxDb" id="9606-ENSP00000376930"/>
<dbReference type="PeptideAtlas" id="O94876"/>
<dbReference type="ProteomicsDB" id="50519">
    <molecule id="O94876-1"/>
</dbReference>
<dbReference type="Pumba" id="O94876"/>
<dbReference type="Antibodypedia" id="33295">
    <property type="antibodies" value="106 antibodies from 19 providers"/>
</dbReference>
<dbReference type="DNASU" id="23023"/>
<dbReference type="Ensembl" id="ENST00000393238.8">
    <molecule id="O94876-1"/>
    <property type="protein sequence ID" value="ENSP00000376930.3"/>
    <property type="gene ID" value="ENSG00000172765.19"/>
</dbReference>
<dbReference type="Ensembl" id="ENST00000698215.1">
    <molecule id="O94876-2"/>
    <property type="protein sequence ID" value="ENSP00000513609.1"/>
    <property type="gene ID" value="ENSG00000172765.19"/>
</dbReference>
<dbReference type="GeneID" id="23023"/>
<dbReference type="KEGG" id="hsa:23023"/>
<dbReference type="MANE-Select" id="ENST00000393238.8">
    <property type="protein sequence ID" value="ENSP00000376930.3"/>
    <property type="RefSeq nucleotide sequence ID" value="NM_001017395.5"/>
    <property type="RefSeq protein sequence ID" value="NP_001017395.2"/>
</dbReference>
<dbReference type="UCSC" id="uc021xdy.2">
    <molecule id="O94876-1"/>
    <property type="organism name" value="human"/>
</dbReference>
<dbReference type="AGR" id="HGNC:29116"/>
<dbReference type="CTD" id="23023"/>
<dbReference type="DisGeNET" id="23023"/>
<dbReference type="GeneCards" id="TMCC1"/>
<dbReference type="HGNC" id="HGNC:29116">
    <property type="gene designation" value="TMCC1"/>
</dbReference>
<dbReference type="HPA" id="ENSG00000172765">
    <property type="expression patterns" value="Low tissue specificity"/>
</dbReference>
<dbReference type="MIM" id="616242">
    <property type="type" value="gene"/>
</dbReference>
<dbReference type="neXtProt" id="NX_O94876"/>
<dbReference type="OpenTargets" id="ENSG00000172765"/>
<dbReference type="PharmGKB" id="PA134951990"/>
<dbReference type="VEuPathDB" id="HostDB:ENSG00000172765"/>
<dbReference type="eggNOG" id="KOG3850">
    <property type="taxonomic scope" value="Eukaryota"/>
</dbReference>
<dbReference type="GeneTree" id="ENSGT00940000155189"/>
<dbReference type="InParanoid" id="O94876"/>
<dbReference type="OMA" id="WEAISEY"/>
<dbReference type="OrthoDB" id="10072335at2759"/>
<dbReference type="PAN-GO" id="O94876">
    <property type="GO annotations" value="5 GO annotations based on evolutionary models"/>
</dbReference>
<dbReference type="PhylomeDB" id="O94876"/>
<dbReference type="TreeFam" id="TF316292"/>
<dbReference type="PathwayCommons" id="O94876"/>
<dbReference type="SignaLink" id="O94876"/>
<dbReference type="BioGRID-ORCS" id="23023">
    <property type="hits" value="12 hits in 1148 CRISPR screens"/>
</dbReference>
<dbReference type="ChiTaRS" id="TMCC1">
    <property type="organism name" value="human"/>
</dbReference>
<dbReference type="GenomeRNAi" id="23023"/>
<dbReference type="Pharos" id="O94876">
    <property type="development level" value="Tbio"/>
</dbReference>
<dbReference type="PRO" id="PR:O94876"/>
<dbReference type="Proteomes" id="UP000005640">
    <property type="component" value="Chromosome 3"/>
</dbReference>
<dbReference type="RNAct" id="O94876">
    <property type="molecule type" value="protein"/>
</dbReference>
<dbReference type="Bgee" id="ENSG00000172765">
    <property type="expression patterns" value="Expressed in secondary oocyte and 210 other cell types or tissues"/>
</dbReference>
<dbReference type="ExpressionAtlas" id="O94876">
    <property type="expression patterns" value="baseline and differential"/>
</dbReference>
<dbReference type="GO" id="GO:0005829">
    <property type="term" value="C:cytosol"/>
    <property type="evidence" value="ECO:0000315"/>
    <property type="project" value="UniProtKB"/>
</dbReference>
<dbReference type="GO" id="GO:0012505">
    <property type="term" value="C:endomembrane system"/>
    <property type="evidence" value="ECO:0000318"/>
    <property type="project" value="GO_Central"/>
</dbReference>
<dbReference type="GO" id="GO:0005789">
    <property type="term" value="C:endoplasmic reticulum membrane"/>
    <property type="evidence" value="ECO:0007669"/>
    <property type="project" value="UniProtKB-SubCell"/>
</dbReference>
<dbReference type="GO" id="GO:0140284">
    <property type="term" value="C:endoplasmic reticulum-endosome membrane contact site"/>
    <property type="evidence" value="ECO:0000314"/>
    <property type="project" value="UniProtKB"/>
</dbReference>
<dbReference type="GO" id="GO:0005791">
    <property type="term" value="C:rough endoplasmic reticulum"/>
    <property type="evidence" value="ECO:0000315"/>
    <property type="project" value="UniProtKB"/>
</dbReference>
<dbReference type="GO" id="GO:0042802">
    <property type="term" value="F:identical protein binding"/>
    <property type="evidence" value="ECO:0000353"/>
    <property type="project" value="UniProtKB"/>
</dbReference>
<dbReference type="GO" id="GO:0007029">
    <property type="term" value="P:endoplasmic reticulum organization"/>
    <property type="evidence" value="ECO:0000315"/>
    <property type="project" value="UniProtKB"/>
</dbReference>
<dbReference type="GO" id="GO:0016197">
    <property type="term" value="P:endosomal transport"/>
    <property type="evidence" value="ECO:0000314"/>
    <property type="project" value="UniProtKB"/>
</dbReference>
<dbReference type="GO" id="GO:0140285">
    <property type="term" value="P:endosome fission"/>
    <property type="evidence" value="ECO:0000314"/>
    <property type="project" value="UniProtKB"/>
</dbReference>
<dbReference type="GO" id="GO:0097750">
    <property type="term" value="P:endosome membrane tubulation"/>
    <property type="evidence" value="ECO:0000314"/>
    <property type="project" value="UniProtKB"/>
</dbReference>
<dbReference type="GO" id="GO:0090148">
    <property type="term" value="P:membrane fission"/>
    <property type="evidence" value="ECO:0000314"/>
    <property type="project" value="UniProtKB"/>
</dbReference>
<dbReference type="InterPro" id="IPR019394">
    <property type="entry name" value="TEX28/TMCC"/>
</dbReference>
<dbReference type="PANTHER" id="PTHR17613">
    <property type="entry name" value="CEREBRAL PROTEIN-11-RELATED"/>
    <property type="match status" value="1"/>
</dbReference>
<dbReference type="PANTHER" id="PTHR17613:SF11">
    <property type="entry name" value="TRANSMEMBRANE AND COILED-COIL DOMAINS PROTEIN 1"/>
    <property type="match status" value="1"/>
</dbReference>
<dbReference type="Pfam" id="PF10267">
    <property type="entry name" value="Tmemb_cc2"/>
    <property type="match status" value="1"/>
</dbReference>
<name>TMCC1_HUMAN</name>
<reference key="1">
    <citation type="journal article" date="2004" name="Nat. Genet.">
        <title>Complete sequencing and characterization of 21,243 full-length human cDNAs.</title>
        <authorList>
            <person name="Ota T."/>
            <person name="Suzuki Y."/>
            <person name="Nishikawa T."/>
            <person name="Otsuki T."/>
            <person name="Sugiyama T."/>
            <person name="Irie R."/>
            <person name="Wakamatsu A."/>
            <person name="Hayashi K."/>
            <person name="Sato H."/>
            <person name="Nagai K."/>
            <person name="Kimura K."/>
            <person name="Makita H."/>
            <person name="Sekine M."/>
            <person name="Obayashi M."/>
            <person name="Nishi T."/>
            <person name="Shibahara T."/>
            <person name="Tanaka T."/>
            <person name="Ishii S."/>
            <person name="Yamamoto J."/>
            <person name="Saito K."/>
            <person name="Kawai Y."/>
            <person name="Isono Y."/>
            <person name="Nakamura Y."/>
            <person name="Nagahari K."/>
            <person name="Murakami K."/>
            <person name="Yasuda T."/>
            <person name="Iwayanagi T."/>
            <person name="Wagatsuma M."/>
            <person name="Shiratori A."/>
            <person name="Sudo H."/>
            <person name="Hosoiri T."/>
            <person name="Kaku Y."/>
            <person name="Kodaira H."/>
            <person name="Kondo H."/>
            <person name="Sugawara M."/>
            <person name="Takahashi M."/>
            <person name="Kanda K."/>
            <person name="Yokoi T."/>
            <person name="Furuya T."/>
            <person name="Kikkawa E."/>
            <person name="Omura Y."/>
            <person name="Abe K."/>
            <person name="Kamihara K."/>
            <person name="Katsuta N."/>
            <person name="Sato K."/>
            <person name="Tanikawa M."/>
            <person name="Yamazaki M."/>
            <person name="Ninomiya K."/>
            <person name="Ishibashi T."/>
            <person name="Yamashita H."/>
            <person name="Murakawa K."/>
            <person name="Fujimori K."/>
            <person name="Tanai H."/>
            <person name="Kimata M."/>
            <person name="Watanabe M."/>
            <person name="Hiraoka S."/>
            <person name="Chiba Y."/>
            <person name="Ishida S."/>
            <person name="Ono Y."/>
            <person name="Takiguchi S."/>
            <person name="Watanabe S."/>
            <person name="Yosida M."/>
            <person name="Hotuta T."/>
            <person name="Kusano J."/>
            <person name="Kanehori K."/>
            <person name="Takahashi-Fujii A."/>
            <person name="Hara H."/>
            <person name="Tanase T.-O."/>
            <person name="Nomura Y."/>
            <person name="Togiya S."/>
            <person name="Komai F."/>
            <person name="Hara R."/>
            <person name="Takeuchi K."/>
            <person name="Arita M."/>
            <person name="Imose N."/>
            <person name="Musashino K."/>
            <person name="Yuuki H."/>
            <person name="Oshima A."/>
            <person name="Sasaki N."/>
            <person name="Aotsuka S."/>
            <person name="Yoshikawa Y."/>
            <person name="Matsunawa H."/>
            <person name="Ichihara T."/>
            <person name="Shiohata N."/>
            <person name="Sano S."/>
            <person name="Moriya S."/>
            <person name="Momiyama H."/>
            <person name="Satoh N."/>
            <person name="Takami S."/>
            <person name="Terashima Y."/>
            <person name="Suzuki O."/>
            <person name="Nakagawa S."/>
            <person name="Senoh A."/>
            <person name="Mizoguchi H."/>
            <person name="Goto Y."/>
            <person name="Shimizu F."/>
            <person name="Wakebe H."/>
            <person name="Hishigaki H."/>
            <person name="Watanabe T."/>
            <person name="Sugiyama A."/>
            <person name="Takemoto M."/>
            <person name="Kawakami B."/>
            <person name="Yamazaki M."/>
            <person name="Watanabe K."/>
            <person name="Kumagai A."/>
            <person name="Itakura S."/>
            <person name="Fukuzumi Y."/>
            <person name="Fujimori Y."/>
            <person name="Komiyama M."/>
            <person name="Tashiro H."/>
            <person name="Tanigami A."/>
            <person name="Fujiwara T."/>
            <person name="Ono T."/>
            <person name="Yamada K."/>
            <person name="Fujii Y."/>
            <person name="Ozaki K."/>
            <person name="Hirao M."/>
            <person name="Ohmori Y."/>
            <person name="Kawabata A."/>
            <person name="Hikiji T."/>
            <person name="Kobatake N."/>
            <person name="Inagaki H."/>
            <person name="Ikema Y."/>
            <person name="Okamoto S."/>
            <person name="Okitani R."/>
            <person name="Kawakami T."/>
            <person name="Noguchi S."/>
            <person name="Itoh T."/>
            <person name="Shigeta K."/>
            <person name="Senba T."/>
            <person name="Matsumura K."/>
            <person name="Nakajima Y."/>
            <person name="Mizuno T."/>
            <person name="Morinaga M."/>
            <person name="Sasaki M."/>
            <person name="Togashi T."/>
            <person name="Oyama M."/>
            <person name="Hata H."/>
            <person name="Watanabe M."/>
            <person name="Komatsu T."/>
            <person name="Mizushima-Sugano J."/>
            <person name="Satoh T."/>
            <person name="Shirai Y."/>
            <person name="Takahashi Y."/>
            <person name="Nakagawa K."/>
            <person name="Okumura K."/>
            <person name="Nagase T."/>
            <person name="Nomura N."/>
            <person name="Kikuchi H."/>
            <person name="Masuho Y."/>
            <person name="Yamashita R."/>
            <person name="Nakai K."/>
            <person name="Yada T."/>
            <person name="Nakamura Y."/>
            <person name="Ohara O."/>
            <person name="Isogai T."/>
            <person name="Sugano S."/>
        </authorList>
    </citation>
    <scope>NUCLEOTIDE SEQUENCE [LARGE SCALE MRNA] (ISOFORMS 1 AND 2)</scope>
    <scope>VARIANT GLY-165</scope>
    <source>
        <tissue>Brain</tissue>
        <tissue>Urinary bladder</tissue>
    </source>
</reference>
<reference key="2">
    <citation type="journal article" date="2006" name="Nature">
        <title>The DNA sequence, annotation and analysis of human chromosome 3.</title>
        <authorList>
            <person name="Muzny D.M."/>
            <person name="Scherer S.E."/>
            <person name="Kaul R."/>
            <person name="Wang J."/>
            <person name="Yu J."/>
            <person name="Sudbrak R."/>
            <person name="Buhay C.J."/>
            <person name="Chen R."/>
            <person name="Cree A."/>
            <person name="Ding Y."/>
            <person name="Dugan-Rocha S."/>
            <person name="Gill R."/>
            <person name="Gunaratne P."/>
            <person name="Harris R.A."/>
            <person name="Hawes A.C."/>
            <person name="Hernandez J."/>
            <person name="Hodgson A.V."/>
            <person name="Hume J."/>
            <person name="Jackson A."/>
            <person name="Khan Z.M."/>
            <person name="Kovar-Smith C."/>
            <person name="Lewis L.R."/>
            <person name="Lozado R.J."/>
            <person name="Metzker M.L."/>
            <person name="Milosavljevic A."/>
            <person name="Miner G.R."/>
            <person name="Morgan M.B."/>
            <person name="Nazareth L.V."/>
            <person name="Scott G."/>
            <person name="Sodergren E."/>
            <person name="Song X.-Z."/>
            <person name="Steffen D."/>
            <person name="Wei S."/>
            <person name="Wheeler D.A."/>
            <person name="Wright M.W."/>
            <person name="Worley K.C."/>
            <person name="Yuan Y."/>
            <person name="Zhang Z."/>
            <person name="Adams C.Q."/>
            <person name="Ansari-Lari M.A."/>
            <person name="Ayele M."/>
            <person name="Brown M.J."/>
            <person name="Chen G."/>
            <person name="Chen Z."/>
            <person name="Clendenning J."/>
            <person name="Clerc-Blankenburg K.P."/>
            <person name="Chen R."/>
            <person name="Chen Z."/>
            <person name="Davis C."/>
            <person name="Delgado O."/>
            <person name="Dinh H.H."/>
            <person name="Dong W."/>
            <person name="Draper H."/>
            <person name="Ernst S."/>
            <person name="Fu G."/>
            <person name="Gonzalez-Garay M.L."/>
            <person name="Garcia D.K."/>
            <person name="Gillett W."/>
            <person name="Gu J."/>
            <person name="Hao B."/>
            <person name="Haugen E."/>
            <person name="Havlak P."/>
            <person name="He X."/>
            <person name="Hennig S."/>
            <person name="Hu S."/>
            <person name="Huang W."/>
            <person name="Jackson L.R."/>
            <person name="Jacob L.S."/>
            <person name="Kelly S.H."/>
            <person name="Kube M."/>
            <person name="Levy R."/>
            <person name="Li Z."/>
            <person name="Liu B."/>
            <person name="Liu J."/>
            <person name="Liu W."/>
            <person name="Lu J."/>
            <person name="Maheshwari M."/>
            <person name="Nguyen B.-V."/>
            <person name="Okwuonu G.O."/>
            <person name="Palmeiri A."/>
            <person name="Pasternak S."/>
            <person name="Perez L.M."/>
            <person name="Phelps K.A."/>
            <person name="Plopper F.J."/>
            <person name="Qiang B."/>
            <person name="Raymond C."/>
            <person name="Rodriguez R."/>
            <person name="Saenphimmachak C."/>
            <person name="Santibanez J."/>
            <person name="Shen H."/>
            <person name="Shen Y."/>
            <person name="Subramanian S."/>
            <person name="Tabor P.E."/>
            <person name="Verduzco D."/>
            <person name="Waldron L."/>
            <person name="Wang J."/>
            <person name="Wang J."/>
            <person name="Wang Q."/>
            <person name="Williams G.A."/>
            <person name="Wong G.K.-S."/>
            <person name="Yao Z."/>
            <person name="Zhang J."/>
            <person name="Zhang X."/>
            <person name="Zhao G."/>
            <person name="Zhou J."/>
            <person name="Zhou Y."/>
            <person name="Nelson D."/>
            <person name="Lehrach H."/>
            <person name="Reinhardt R."/>
            <person name="Naylor S.L."/>
            <person name="Yang H."/>
            <person name="Olson M."/>
            <person name="Weinstock G."/>
            <person name="Gibbs R.A."/>
        </authorList>
    </citation>
    <scope>NUCLEOTIDE SEQUENCE [LARGE SCALE GENOMIC DNA]</scope>
</reference>
<reference key="3">
    <citation type="journal article" date="2004" name="Genome Res.">
        <title>The status, quality, and expansion of the NIH full-length cDNA project: the Mammalian Gene Collection (MGC).</title>
        <authorList>
            <consortium name="The MGC Project Team"/>
        </authorList>
    </citation>
    <scope>NUCLEOTIDE SEQUENCE [LARGE SCALE MRNA] (ISOFORM 1)</scope>
    <scope>VARIANT GLY-165</scope>
    <source>
        <tissue>Skin</tissue>
    </source>
</reference>
<reference key="4">
    <citation type="journal article" date="2007" name="BMC Genomics">
        <title>The full-ORF clone resource of the German cDNA consortium.</title>
        <authorList>
            <person name="Bechtel S."/>
            <person name="Rosenfelder H."/>
            <person name="Duda A."/>
            <person name="Schmidt C.P."/>
            <person name="Ernst U."/>
            <person name="Wellenreuther R."/>
            <person name="Mehrle A."/>
            <person name="Schuster C."/>
            <person name="Bahr A."/>
            <person name="Bloecker H."/>
            <person name="Heubner D."/>
            <person name="Hoerlein A."/>
            <person name="Michel G."/>
            <person name="Wedler H."/>
            <person name="Koehrer K."/>
            <person name="Ottenwaelder B."/>
            <person name="Poustka A."/>
            <person name="Wiemann S."/>
            <person name="Schupp I."/>
        </authorList>
    </citation>
    <scope>NUCLEOTIDE SEQUENCE [LARGE SCALE MRNA] OF 15-653 (ISOFORM 1)</scope>
    <scope>VARIANT GLY-165</scope>
    <source>
        <tissue>Endometrial tumor</tissue>
    </source>
</reference>
<reference key="5">
    <citation type="journal article" date="1998" name="DNA Res.">
        <title>Prediction of the coding sequences of unidentified human genes. XI. The complete sequences of 100 new cDNA clones from brain which code for large proteins in vitro.</title>
        <authorList>
            <person name="Nagase T."/>
            <person name="Ishikawa K."/>
            <person name="Suyama M."/>
            <person name="Kikuno R."/>
            <person name="Miyajima N."/>
            <person name="Tanaka A."/>
            <person name="Kotani H."/>
            <person name="Nomura N."/>
            <person name="Ohara O."/>
        </authorList>
    </citation>
    <scope>NUCLEOTIDE SEQUENCE [LARGE SCALE MRNA] OF 334-653 (ISOFORM 1/2)</scope>
    <source>
        <tissue>Brain</tissue>
    </source>
</reference>
<reference key="6">
    <citation type="journal article" date="2008" name="Mol. Cell">
        <title>Kinase-selective enrichment enables quantitative phosphoproteomics of the kinome across the cell cycle.</title>
        <authorList>
            <person name="Daub H."/>
            <person name="Olsen J.V."/>
            <person name="Bairlein M."/>
            <person name="Gnad F."/>
            <person name="Oppermann F.S."/>
            <person name="Korner R."/>
            <person name="Greff Z."/>
            <person name="Keri G."/>
            <person name="Stemmann O."/>
            <person name="Mann M."/>
        </authorList>
    </citation>
    <scope>IDENTIFICATION BY MASS SPECTROMETRY [LARGE SCALE ANALYSIS]</scope>
    <source>
        <tissue>Cervix carcinoma</tissue>
    </source>
</reference>
<reference key="7">
    <citation type="journal article" date="2009" name="Sci. Signal.">
        <title>Quantitative phosphoproteomic analysis of T cell receptor signaling reveals system-wide modulation of protein-protein interactions.</title>
        <authorList>
            <person name="Mayya V."/>
            <person name="Lundgren D.H."/>
            <person name="Hwang S.-I."/>
            <person name="Rezaul K."/>
            <person name="Wu L."/>
            <person name="Eng J.K."/>
            <person name="Rodionov V."/>
            <person name="Han D.K."/>
        </authorList>
    </citation>
    <scope>PHOSPHORYLATION [LARGE SCALE ANALYSIS] AT SER-382</scope>
    <scope>VARIANT [LARGE SCALE ANALYSIS] GLY-165</scope>
    <scope>IDENTIFICATION BY MASS SPECTROMETRY [LARGE SCALE ANALYSIS]</scope>
    <source>
        <tissue>Leukemic T-cell</tissue>
    </source>
</reference>
<reference key="8">
    <citation type="journal article" date="2011" name="Sci. Signal.">
        <title>System-wide temporal characterization of the proteome and phosphoproteome of human embryonic stem cell differentiation.</title>
        <authorList>
            <person name="Rigbolt K.T."/>
            <person name="Prokhorova T.A."/>
            <person name="Akimov V."/>
            <person name="Henningsen J."/>
            <person name="Johansen P.T."/>
            <person name="Kratchmarova I."/>
            <person name="Kassem M."/>
            <person name="Mann M."/>
            <person name="Olsen J.V."/>
            <person name="Blagoev B."/>
        </authorList>
    </citation>
    <scope>PHOSPHORYLATION [LARGE SCALE ANALYSIS] AT SER-382</scope>
    <scope>IDENTIFICATION BY MASS SPECTROMETRY [LARGE SCALE ANALYSIS]</scope>
</reference>
<reference key="9">
    <citation type="journal article" date="2012" name="Proc. Natl. Acad. Sci. U.S.A.">
        <title>N-terminal acetylome analyses and functional insights of the N-terminal acetyltransferase NatB.</title>
        <authorList>
            <person name="Van Damme P."/>
            <person name="Lasa M."/>
            <person name="Polevoda B."/>
            <person name="Gazquez C."/>
            <person name="Elosegui-Artola A."/>
            <person name="Kim D.S."/>
            <person name="De Juan-Pardo E."/>
            <person name="Demeyer K."/>
            <person name="Hole K."/>
            <person name="Larrea E."/>
            <person name="Timmerman E."/>
            <person name="Prieto J."/>
            <person name="Arnesen T."/>
            <person name="Sherman F."/>
            <person name="Gevaert K."/>
            <person name="Aldabe R."/>
        </authorList>
    </citation>
    <scope>ACETYLATION [LARGE SCALE ANALYSIS] AT MET-1</scope>
    <scope>IDENTIFICATION BY MASS SPECTROMETRY [LARGE SCALE ANALYSIS]</scope>
</reference>
<reference key="10">
    <citation type="journal article" date="2013" name="J. Proteome Res.">
        <title>Toward a comprehensive characterization of a human cancer cell phosphoproteome.</title>
        <authorList>
            <person name="Zhou H."/>
            <person name="Di Palma S."/>
            <person name="Preisinger C."/>
            <person name="Peng M."/>
            <person name="Polat A.N."/>
            <person name="Heck A.J."/>
            <person name="Mohammed S."/>
        </authorList>
    </citation>
    <scope>PHOSPHORYLATION [LARGE SCALE ANALYSIS] AT SER-382 AND SER-414</scope>
    <scope>IDENTIFICATION BY MASS SPECTROMETRY [LARGE SCALE ANALYSIS]</scope>
    <source>
        <tissue>Cervix carcinoma</tissue>
        <tissue>Erythroleukemia</tissue>
    </source>
</reference>
<reference key="11">
    <citation type="journal article" date="2014" name="J. Proteomics">
        <title>An enzyme assisted RP-RPLC approach for in-depth analysis of human liver phosphoproteome.</title>
        <authorList>
            <person name="Bian Y."/>
            <person name="Song C."/>
            <person name="Cheng K."/>
            <person name="Dong M."/>
            <person name="Wang F."/>
            <person name="Huang J."/>
            <person name="Sun D."/>
            <person name="Wang L."/>
            <person name="Ye M."/>
            <person name="Zou H."/>
        </authorList>
    </citation>
    <scope>PHOSPHORYLATION [LARGE SCALE ANALYSIS] AT SER-382</scope>
    <scope>IDENTIFICATION BY MASS SPECTROMETRY [LARGE SCALE ANALYSIS]</scope>
    <source>
        <tissue>Liver</tissue>
    </source>
</reference>
<reference key="12">
    <citation type="journal article" date="2014" name="PLoS ONE">
        <title>Transmembrane and coiled-coil domain family 1 is a novel protein of the endoplasmic reticulum.</title>
        <authorList>
            <person name="Zhang C."/>
            <person name="Kho Y.S."/>
            <person name="Wang Z."/>
            <person name="Chiang Y.T."/>
            <person name="Ng G.K."/>
            <person name="Shaw P.C."/>
            <person name="Wang Y."/>
            <person name="Qi R.Z."/>
        </authorList>
    </citation>
    <scope>SUBCELLULAR LOCATION</scope>
    <scope>SUBUNIT</scope>
</reference>
<reference key="13">
    <citation type="journal article" date="2018" name="Cell">
        <title>A novel class of ER membrane proteins regulates ER-associated endosome fission.</title>
        <authorList>
            <person name="Hoyer M.J."/>
            <person name="Chitwood P.J."/>
            <person name="Ebmeier C.C."/>
            <person name="Striepen J.F."/>
            <person name="Qi R.Z."/>
            <person name="Old W.M."/>
            <person name="Voeltz G.K."/>
        </authorList>
    </citation>
    <scope>FUNCTION</scope>
    <scope>SUBCELLULAR LOCATION</scope>
</reference>
<gene>
    <name evidence="9 12" type="primary">TMCC1</name>
    <name evidence="10" type="synonym">KIAA0779</name>
</gene>